<proteinExistence type="inferred from homology"/>
<reference key="1">
    <citation type="submission" date="2002-07" db="EMBL/GenBank/DDBJ databases">
        <title>Molecular evolution of Listeria spp. and Listeria monocytogenes.</title>
        <authorList>
            <person name="Cai S."/>
            <person name="Nielsen R."/>
            <person name="Roberts A.J."/>
            <person name="Wiedmann M."/>
        </authorList>
    </citation>
    <scope>NUCLEOTIDE SEQUENCE [GENOMIC DNA]</scope>
    <source>
        <strain>FSLc2006</strain>
        <strain>FSLn1064</strain>
    </source>
</reference>
<gene>
    <name evidence="1" type="primary">recA</name>
</gene>
<sequence>MNDRQAALDQALKQIEKQFGKGSIMKLGEHSDQNISTISSGSLALDIALGVGGYPRGRIIEVYGPESSGKTTVALHAIAEVQAQGGTAAFIDAEHALDPAYAKNLGVNIDELLLSQPDTGEQALEIAEALVRSGAVDMLVIDSVAALVPRAEIEGEMGDAHVGLQARLMSQALRKLSGAINKSKTIAIFINQIREKVGVMFGNPEITPGGRALKFYSTVRLEVRRAEQLKQGTDVMGNKTKIKVVKNKVAPPFRIAEVDIMYGEGISREGELVDMAAEVDVINKSGSWYSYKEERIGQGRENAKQYLKEHTDIRDEISQRVREEYEIDGANKEPLEETEETLSLLDDE</sequence>
<organism>
    <name type="scientific">Listeria welshimeri</name>
    <dbReference type="NCBI Taxonomy" id="1643"/>
    <lineage>
        <taxon>Bacteria</taxon>
        <taxon>Bacillati</taxon>
        <taxon>Bacillota</taxon>
        <taxon>Bacilli</taxon>
        <taxon>Bacillales</taxon>
        <taxon>Listeriaceae</taxon>
        <taxon>Listeria</taxon>
    </lineage>
</organism>
<accession>Q83TH3</accession>
<protein>
    <recommendedName>
        <fullName evidence="1">Protein RecA</fullName>
    </recommendedName>
    <alternativeName>
        <fullName evidence="1">Recombinase A</fullName>
    </alternativeName>
</protein>
<feature type="chain" id="PRO_0000122751" description="Protein RecA">
    <location>
        <begin position="1"/>
        <end position="348"/>
    </location>
</feature>
<feature type="region of interest" description="Disordered" evidence="2">
    <location>
        <begin position="325"/>
        <end position="348"/>
    </location>
</feature>
<feature type="compositionally biased region" description="Basic and acidic residues" evidence="2">
    <location>
        <begin position="325"/>
        <end position="335"/>
    </location>
</feature>
<feature type="compositionally biased region" description="Acidic residues" evidence="2">
    <location>
        <begin position="336"/>
        <end position="348"/>
    </location>
</feature>
<feature type="binding site" evidence="1">
    <location>
        <begin position="64"/>
        <end position="71"/>
    </location>
    <ligand>
        <name>ATP</name>
        <dbReference type="ChEBI" id="CHEBI:30616"/>
    </ligand>
</feature>
<dbReference type="EMBL" id="AY135426">
    <property type="protein sequence ID" value="AAN15816.1"/>
    <property type="molecule type" value="Genomic_DNA"/>
</dbReference>
<dbReference type="EMBL" id="AY135427">
    <property type="protein sequence ID" value="AAN15817.1"/>
    <property type="molecule type" value="Genomic_DNA"/>
</dbReference>
<dbReference type="RefSeq" id="WP_011702210.1">
    <property type="nucleotide sequence ID" value="NZ_NYPG01000001.1"/>
</dbReference>
<dbReference type="SMR" id="Q83TH3"/>
<dbReference type="GeneID" id="61189290"/>
<dbReference type="OMA" id="DSKMGLH"/>
<dbReference type="GO" id="GO:0005829">
    <property type="term" value="C:cytosol"/>
    <property type="evidence" value="ECO:0007669"/>
    <property type="project" value="TreeGrafter"/>
</dbReference>
<dbReference type="GO" id="GO:0005524">
    <property type="term" value="F:ATP binding"/>
    <property type="evidence" value="ECO:0007669"/>
    <property type="project" value="UniProtKB-UniRule"/>
</dbReference>
<dbReference type="GO" id="GO:0016887">
    <property type="term" value="F:ATP hydrolysis activity"/>
    <property type="evidence" value="ECO:0007669"/>
    <property type="project" value="InterPro"/>
</dbReference>
<dbReference type="GO" id="GO:0140664">
    <property type="term" value="F:ATP-dependent DNA damage sensor activity"/>
    <property type="evidence" value="ECO:0007669"/>
    <property type="project" value="InterPro"/>
</dbReference>
<dbReference type="GO" id="GO:0003684">
    <property type="term" value="F:damaged DNA binding"/>
    <property type="evidence" value="ECO:0007669"/>
    <property type="project" value="UniProtKB-UniRule"/>
</dbReference>
<dbReference type="GO" id="GO:0003697">
    <property type="term" value="F:single-stranded DNA binding"/>
    <property type="evidence" value="ECO:0007669"/>
    <property type="project" value="UniProtKB-UniRule"/>
</dbReference>
<dbReference type="GO" id="GO:0006310">
    <property type="term" value="P:DNA recombination"/>
    <property type="evidence" value="ECO:0007669"/>
    <property type="project" value="UniProtKB-UniRule"/>
</dbReference>
<dbReference type="GO" id="GO:0006281">
    <property type="term" value="P:DNA repair"/>
    <property type="evidence" value="ECO:0007669"/>
    <property type="project" value="UniProtKB-UniRule"/>
</dbReference>
<dbReference type="GO" id="GO:0009432">
    <property type="term" value="P:SOS response"/>
    <property type="evidence" value="ECO:0007669"/>
    <property type="project" value="UniProtKB-UniRule"/>
</dbReference>
<dbReference type="CDD" id="cd00983">
    <property type="entry name" value="RecA"/>
    <property type="match status" value="1"/>
</dbReference>
<dbReference type="FunFam" id="3.40.50.300:FF:000087">
    <property type="entry name" value="Recombinase RecA"/>
    <property type="match status" value="1"/>
</dbReference>
<dbReference type="Gene3D" id="3.40.50.300">
    <property type="entry name" value="P-loop containing nucleotide triphosphate hydrolases"/>
    <property type="match status" value="1"/>
</dbReference>
<dbReference type="HAMAP" id="MF_00268">
    <property type="entry name" value="RecA"/>
    <property type="match status" value="1"/>
</dbReference>
<dbReference type="InterPro" id="IPR003593">
    <property type="entry name" value="AAA+_ATPase"/>
</dbReference>
<dbReference type="InterPro" id="IPR013765">
    <property type="entry name" value="DNA_recomb/repair_RecA"/>
</dbReference>
<dbReference type="InterPro" id="IPR020584">
    <property type="entry name" value="DNA_recomb/repair_RecA_CS"/>
</dbReference>
<dbReference type="InterPro" id="IPR027417">
    <property type="entry name" value="P-loop_NTPase"/>
</dbReference>
<dbReference type="InterPro" id="IPR049261">
    <property type="entry name" value="RecA-like_C"/>
</dbReference>
<dbReference type="InterPro" id="IPR049428">
    <property type="entry name" value="RecA-like_N"/>
</dbReference>
<dbReference type="InterPro" id="IPR020588">
    <property type="entry name" value="RecA_ATP-bd"/>
</dbReference>
<dbReference type="InterPro" id="IPR023400">
    <property type="entry name" value="RecA_C_sf"/>
</dbReference>
<dbReference type="InterPro" id="IPR020587">
    <property type="entry name" value="RecA_monomer-monomer_interface"/>
</dbReference>
<dbReference type="NCBIfam" id="TIGR02012">
    <property type="entry name" value="tigrfam_recA"/>
    <property type="match status" value="1"/>
</dbReference>
<dbReference type="PANTHER" id="PTHR45900:SF1">
    <property type="entry name" value="MITOCHONDRIAL DNA REPAIR PROTEIN RECA HOMOLOG-RELATED"/>
    <property type="match status" value="1"/>
</dbReference>
<dbReference type="PANTHER" id="PTHR45900">
    <property type="entry name" value="RECA"/>
    <property type="match status" value="1"/>
</dbReference>
<dbReference type="Pfam" id="PF00154">
    <property type="entry name" value="RecA"/>
    <property type="match status" value="1"/>
</dbReference>
<dbReference type="Pfam" id="PF21096">
    <property type="entry name" value="RecA_C"/>
    <property type="match status" value="1"/>
</dbReference>
<dbReference type="PRINTS" id="PR00142">
    <property type="entry name" value="RECA"/>
</dbReference>
<dbReference type="SMART" id="SM00382">
    <property type="entry name" value="AAA"/>
    <property type="match status" value="1"/>
</dbReference>
<dbReference type="SUPFAM" id="SSF52540">
    <property type="entry name" value="P-loop containing nucleoside triphosphate hydrolases"/>
    <property type="match status" value="1"/>
</dbReference>
<dbReference type="SUPFAM" id="SSF54752">
    <property type="entry name" value="RecA protein, C-terminal domain"/>
    <property type="match status" value="1"/>
</dbReference>
<dbReference type="PROSITE" id="PS00321">
    <property type="entry name" value="RECA_1"/>
    <property type="match status" value="1"/>
</dbReference>
<dbReference type="PROSITE" id="PS50162">
    <property type="entry name" value="RECA_2"/>
    <property type="match status" value="1"/>
</dbReference>
<dbReference type="PROSITE" id="PS50163">
    <property type="entry name" value="RECA_3"/>
    <property type="match status" value="1"/>
</dbReference>
<keyword id="KW-0067">ATP-binding</keyword>
<keyword id="KW-0963">Cytoplasm</keyword>
<keyword id="KW-0227">DNA damage</keyword>
<keyword id="KW-0233">DNA recombination</keyword>
<keyword id="KW-0234">DNA repair</keyword>
<keyword id="KW-0238">DNA-binding</keyword>
<keyword id="KW-0547">Nucleotide-binding</keyword>
<keyword id="KW-0742">SOS response</keyword>
<evidence type="ECO:0000255" key="1">
    <source>
        <dbReference type="HAMAP-Rule" id="MF_00268"/>
    </source>
</evidence>
<evidence type="ECO:0000256" key="2">
    <source>
        <dbReference type="SAM" id="MobiDB-lite"/>
    </source>
</evidence>
<comment type="function">
    <text evidence="1">Can catalyze the hydrolysis of ATP in the presence of single-stranded DNA, the ATP-dependent uptake of single-stranded DNA by duplex DNA, and the ATP-dependent hybridization of homologous single-stranded DNAs. It interacts with LexA causing its activation and leading to its autocatalytic cleavage.</text>
</comment>
<comment type="subcellular location">
    <subcellularLocation>
        <location evidence="1">Cytoplasm</location>
    </subcellularLocation>
</comment>
<comment type="similarity">
    <text evidence="1">Belongs to the RecA family.</text>
</comment>
<name>RECA_LISWE</name>